<gene>
    <name evidence="1" type="primary">ubiB</name>
    <name type="ordered locus">SeHA_C4299</name>
</gene>
<sequence length="546" mass="63239">MTPGEVRRLYFIIRTFLSYGLDELIPRMRLTLPLRLWRYSLFWMPNRHKDKLLGERLRLALQELGPVWIKFGQMLSTRRDLFPPQIADQLALLQDKVAPFDGRLAKAQIEEAMGGLPVEAWFDDFDIQPLASASIAQVHTARLKSNGKEVVIKVIRPDILPVIQADLKLIYRLARWVPRLLPDGRRLRPTEVVREYEKTLIDELNLLRESANAIQLRRNFENSPMLYIPEVYSDYCSQNMMVMERIYGIPVSDVAALEKNGTNMKLLAERGVKVFFTQVFRDSFFHADMHPGNIFVSHEHPENPQYIGIDCGIVGSLNKEDKRYLAENFIAFFNRDYRKVAELHVDSGWVPPDTNVEDFEFAIRTVCEPIFEKPLAEISFGHVLLNLFNTARRFNMEVQPQLVLLQKTLLYVEGVGRQLYPQLDLWKTAKPFLESWIKDQVGIPALTRALKEKAPFWVEKMPEIPELVYDSLRQGKYLQHSVDKIARELQVNHVRQSQSRYLLGIGATLLLSGSFLLVNRPEWGLMPGWLMVGGVVVWLVGWRKTR</sequence>
<feature type="chain" id="PRO_1000123920" description="Probable protein kinase UbiB">
    <location>
        <begin position="1"/>
        <end position="546"/>
    </location>
</feature>
<feature type="transmembrane region" description="Helical" evidence="1">
    <location>
        <begin position="501"/>
        <end position="521"/>
    </location>
</feature>
<feature type="transmembrane region" description="Helical" evidence="1">
    <location>
        <begin position="522"/>
        <end position="542"/>
    </location>
</feature>
<feature type="domain" description="Protein kinase" evidence="1">
    <location>
        <begin position="124"/>
        <end position="502"/>
    </location>
</feature>
<feature type="active site" description="Proton acceptor" evidence="1">
    <location>
        <position position="288"/>
    </location>
</feature>
<feature type="binding site" evidence="1">
    <location>
        <begin position="130"/>
        <end position="138"/>
    </location>
    <ligand>
        <name>ATP</name>
        <dbReference type="ChEBI" id="CHEBI:30616"/>
    </ligand>
</feature>
<feature type="binding site" evidence="1">
    <location>
        <position position="153"/>
    </location>
    <ligand>
        <name>ATP</name>
        <dbReference type="ChEBI" id="CHEBI:30616"/>
    </ligand>
</feature>
<reference key="1">
    <citation type="journal article" date="2011" name="J. Bacteriol.">
        <title>Comparative genomics of 28 Salmonella enterica isolates: evidence for CRISPR-mediated adaptive sublineage evolution.</title>
        <authorList>
            <person name="Fricke W.F."/>
            <person name="Mammel M.K."/>
            <person name="McDermott P.F."/>
            <person name="Tartera C."/>
            <person name="White D.G."/>
            <person name="Leclerc J.E."/>
            <person name="Ravel J."/>
            <person name="Cebula T.A."/>
        </authorList>
    </citation>
    <scope>NUCLEOTIDE SEQUENCE [LARGE SCALE GENOMIC DNA]</scope>
    <source>
        <strain>SL476</strain>
    </source>
</reference>
<proteinExistence type="inferred from homology"/>
<accession>B4TBR5</accession>
<name>UBIB_SALHS</name>
<keyword id="KW-0067">ATP-binding</keyword>
<keyword id="KW-0997">Cell inner membrane</keyword>
<keyword id="KW-1003">Cell membrane</keyword>
<keyword id="KW-0418">Kinase</keyword>
<keyword id="KW-0472">Membrane</keyword>
<keyword id="KW-0547">Nucleotide-binding</keyword>
<keyword id="KW-0808">Transferase</keyword>
<keyword id="KW-0812">Transmembrane</keyword>
<keyword id="KW-1133">Transmembrane helix</keyword>
<keyword id="KW-0831">Ubiquinone biosynthesis</keyword>
<protein>
    <recommendedName>
        <fullName evidence="1">Probable protein kinase UbiB</fullName>
        <ecNumber evidence="1">2.7.-.-</ecNumber>
    </recommendedName>
    <alternativeName>
        <fullName evidence="1">Ubiquinone biosynthesis protein UbiB</fullName>
    </alternativeName>
</protein>
<organism>
    <name type="scientific">Salmonella heidelberg (strain SL476)</name>
    <dbReference type="NCBI Taxonomy" id="454169"/>
    <lineage>
        <taxon>Bacteria</taxon>
        <taxon>Pseudomonadati</taxon>
        <taxon>Pseudomonadota</taxon>
        <taxon>Gammaproteobacteria</taxon>
        <taxon>Enterobacterales</taxon>
        <taxon>Enterobacteriaceae</taxon>
        <taxon>Salmonella</taxon>
    </lineage>
</organism>
<comment type="function">
    <text evidence="1">Is probably a protein kinase regulator of UbiI activity which is involved in aerobic coenzyme Q (ubiquinone) biosynthesis.</text>
</comment>
<comment type="pathway">
    <text>Cofactor biosynthesis; ubiquinone biosynthesis [regulation].</text>
</comment>
<comment type="subcellular location">
    <subcellularLocation>
        <location evidence="1">Cell inner membrane</location>
        <topology evidence="1">Multi-pass membrane protein</topology>
    </subcellularLocation>
</comment>
<comment type="similarity">
    <text evidence="1">Belongs to the ABC1 family. UbiB subfamily.</text>
</comment>
<dbReference type="EC" id="2.7.-.-" evidence="1"/>
<dbReference type="EMBL" id="CP001120">
    <property type="protein sequence ID" value="ACF68339.1"/>
    <property type="molecule type" value="Genomic_DNA"/>
</dbReference>
<dbReference type="RefSeq" id="WP_000187559.1">
    <property type="nucleotide sequence ID" value="NC_011083.1"/>
</dbReference>
<dbReference type="SMR" id="B4TBR5"/>
<dbReference type="KEGG" id="seh:SeHA_C4299"/>
<dbReference type="HOGENOM" id="CLU_006533_0_0_6"/>
<dbReference type="UniPathway" id="UPA00232"/>
<dbReference type="Proteomes" id="UP000001866">
    <property type="component" value="Chromosome"/>
</dbReference>
<dbReference type="GO" id="GO:0005886">
    <property type="term" value="C:plasma membrane"/>
    <property type="evidence" value="ECO:0007669"/>
    <property type="project" value="UniProtKB-SubCell"/>
</dbReference>
<dbReference type="GO" id="GO:0005524">
    <property type="term" value="F:ATP binding"/>
    <property type="evidence" value="ECO:0007669"/>
    <property type="project" value="UniProtKB-KW"/>
</dbReference>
<dbReference type="GO" id="GO:0004672">
    <property type="term" value="F:protein kinase activity"/>
    <property type="evidence" value="ECO:0007669"/>
    <property type="project" value="UniProtKB-UniRule"/>
</dbReference>
<dbReference type="GO" id="GO:0010795">
    <property type="term" value="P:regulation of ubiquinone biosynthetic process"/>
    <property type="evidence" value="ECO:0007669"/>
    <property type="project" value="UniProtKB-UniRule"/>
</dbReference>
<dbReference type="GO" id="GO:0006744">
    <property type="term" value="P:ubiquinone biosynthetic process"/>
    <property type="evidence" value="ECO:0007669"/>
    <property type="project" value="UniProtKB-UniPathway"/>
</dbReference>
<dbReference type="CDD" id="cd13972">
    <property type="entry name" value="UbiB"/>
    <property type="match status" value="1"/>
</dbReference>
<dbReference type="HAMAP" id="MF_00414">
    <property type="entry name" value="UbiB"/>
    <property type="match status" value="1"/>
</dbReference>
<dbReference type="InterPro" id="IPR004147">
    <property type="entry name" value="ABC1_dom"/>
</dbReference>
<dbReference type="InterPro" id="IPR011009">
    <property type="entry name" value="Kinase-like_dom_sf"/>
</dbReference>
<dbReference type="InterPro" id="IPR010232">
    <property type="entry name" value="UbiB"/>
</dbReference>
<dbReference type="InterPro" id="IPR045308">
    <property type="entry name" value="UbiB_bact"/>
</dbReference>
<dbReference type="InterPro" id="IPR050154">
    <property type="entry name" value="UbiB_kinase"/>
</dbReference>
<dbReference type="NCBIfam" id="NF003404">
    <property type="entry name" value="PRK04750.1"/>
    <property type="match status" value="1"/>
</dbReference>
<dbReference type="NCBIfam" id="TIGR01982">
    <property type="entry name" value="UbiB"/>
    <property type="match status" value="1"/>
</dbReference>
<dbReference type="PANTHER" id="PTHR10566">
    <property type="entry name" value="CHAPERONE-ACTIVITY OF BC1 COMPLEX CABC1 -RELATED"/>
    <property type="match status" value="1"/>
</dbReference>
<dbReference type="PANTHER" id="PTHR10566:SF113">
    <property type="entry name" value="PROTEIN ACTIVITY OF BC1 COMPLEX KINASE 7, CHLOROPLASTIC"/>
    <property type="match status" value="1"/>
</dbReference>
<dbReference type="Pfam" id="PF03109">
    <property type="entry name" value="ABC1"/>
    <property type="match status" value="1"/>
</dbReference>
<dbReference type="SUPFAM" id="SSF56112">
    <property type="entry name" value="Protein kinase-like (PK-like)"/>
    <property type="match status" value="1"/>
</dbReference>
<evidence type="ECO:0000255" key="1">
    <source>
        <dbReference type="HAMAP-Rule" id="MF_00414"/>
    </source>
</evidence>